<keyword id="KW-0008">Acetylcholine receptor inhibiting toxin</keyword>
<keyword id="KW-0903">Direct protein sequencing</keyword>
<keyword id="KW-1015">Disulfide bond</keyword>
<keyword id="KW-0872">Ion channel impairing toxin</keyword>
<keyword id="KW-0528">Neurotoxin</keyword>
<keyword id="KW-0629">Postsynaptic neurotoxin</keyword>
<keyword id="KW-0964">Secreted</keyword>
<keyword id="KW-0800">Toxin</keyword>
<protein>
    <recommendedName>
        <fullName>Alpha-elapitoxin-Aa2e</fullName>
        <shortName>Alpha-EPTX-Aa2e</shortName>
    </recommendedName>
    <alternativeName>
        <fullName>Aa el/Aa e2</fullName>
    </alternativeName>
</protein>
<dbReference type="SMR" id="P0DKW9"/>
<dbReference type="GO" id="GO:0005576">
    <property type="term" value="C:extracellular region"/>
    <property type="evidence" value="ECO:0007669"/>
    <property type="project" value="UniProtKB-SubCell"/>
</dbReference>
<dbReference type="GO" id="GO:0030550">
    <property type="term" value="F:acetylcholine receptor inhibitor activity"/>
    <property type="evidence" value="ECO:0007669"/>
    <property type="project" value="UniProtKB-KW"/>
</dbReference>
<dbReference type="GO" id="GO:0099106">
    <property type="term" value="F:ion channel regulator activity"/>
    <property type="evidence" value="ECO:0007669"/>
    <property type="project" value="UniProtKB-KW"/>
</dbReference>
<dbReference type="GO" id="GO:0090729">
    <property type="term" value="F:toxin activity"/>
    <property type="evidence" value="ECO:0007669"/>
    <property type="project" value="UniProtKB-KW"/>
</dbReference>
<dbReference type="CDD" id="cd00206">
    <property type="entry name" value="TFP_snake_toxin"/>
    <property type="match status" value="1"/>
</dbReference>
<dbReference type="Gene3D" id="2.10.60.10">
    <property type="entry name" value="CD59"/>
    <property type="match status" value="1"/>
</dbReference>
<dbReference type="InterPro" id="IPR003571">
    <property type="entry name" value="Snake_3FTx"/>
</dbReference>
<dbReference type="InterPro" id="IPR045860">
    <property type="entry name" value="Snake_toxin-like_sf"/>
</dbReference>
<dbReference type="InterPro" id="IPR018354">
    <property type="entry name" value="Snake_toxin_con_site"/>
</dbReference>
<dbReference type="InterPro" id="IPR054131">
    <property type="entry name" value="Toxin_cobra-type"/>
</dbReference>
<dbReference type="Pfam" id="PF21947">
    <property type="entry name" value="Toxin_cobra-type"/>
    <property type="match status" value="1"/>
</dbReference>
<dbReference type="SUPFAM" id="SSF57302">
    <property type="entry name" value="Snake toxin-like"/>
    <property type="match status" value="1"/>
</dbReference>
<dbReference type="PROSITE" id="PS00272">
    <property type="entry name" value="SNAKE_TOXIN"/>
    <property type="match status" value="1"/>
</dbReference>
<sequence length="79" mass="8761">VICYVGYNNPQTCPPGGNVCFTKTWCDARCHQLGKRVEMGCATTCPKVNRGVDIKCCSTDKCNPFPKTTPPWKRPRGKP</sequence>
<feature type="chain" id="PRO_0000420999" description="Alpha-elapitoxin-Aa2e">
    <location>
        <begin position="1"/>
        <end position="79"/>
    </location>
</feature>
<feature type="disulfide bond" evidence="1">
    <location>
        <begin position="3"/>
        <end position="20"/>
    </location>
</feature>
<feature type="disulfide bond" evidence="1">
    <location>
        <begin position="13"/>
        <end position="41"/>
    </location>
</feature>
<feature type="disulfide bond" evidence="1">
    <location>
        <begin position="26"/>
        <end position="30"/>
    </location>
</feature>
<feature type="disulfide bond" evidence="1">
    <location>
        <begin position="45"/>
        <end position="56"/>
    </location>
</feature>
<feature type="disulfide bond" evidence="1">
    <location>
        <begin position="57"/>
        <end position="62"/>
    </location>
</feature>
<accession>P0DKW9</accession>
<reference key="1">
    <citation type="journal article" date="1997" name="Toxicon">
        <title>Isolation and amino acid sequence of a new long-chain neurotoxin with two chromatographic isoforms (Aa el and Ae e2) from the venom of the Australian death adder (Acanthophis antarcticus).</title>
        <authorList>
            <person name="Tyler M.I."/>
            <person name="Retson-Yip K.V."/>
            <person name="Gibson M.K."/>
            <person name="Barnett D."/>
            <person name="Howe E."/>
            <person name="Stocklin R."/>
            <person name="Turnbull R.K."/>
            <person name="Kuchel T."/>
            <person name="Mirtschin P."/>
        </authorList>
    </citation>
    <scope>PROTEIN SEQUENCE</scope>
    <scope>FUNCTION</scope>
    <scope>SUBCELLULAR LOCATION</scope>
    <scope>MASS SPECTROMETRY</scope>
    <scope>TOXIC DOSE</scope>
    <source>
        <tissue>Venom</tissue>
    </source>
</reference>
<evidence type="ECO:0000250" key="1"/>
<evidence type="ECO:0000250" key="2">
    <source>
        <dbReference type="UniProtKB" id="P60615"/>
    </source>
</evidence>
<evidence type="ECO:0000269" key="3">
    <source>
    </source>
</evidence>
<evidence type="ECO:0000305" key="4"/>
<evidence type="ECO:0000305" key="5">
    <source>
    </source>
</evidence>
<proteinExistence type="evidence at protein level"/>
<name>3L22E_ACAAN</name>
<comment type="function">
    <text evidence="2 3">Binds with high affinity to muscular (alpha-1/CHRNA1) and neuronal (alpha-7/CHRNA7) nicotinic acetylcholine receptor (nAChR) and inhibits acetylcholine from binding to the receptor, thereby impairing neuromuscular and neuronal transmission (By similarity). Produces paralysis, clear dyspnea and lethality on mice (PubMed:9133710).</text>
</comment>
<comment type="subcellular location">
    <subcellularLocation>
        <location evidence="3">Secreted</location>
    </subcellularLocation>
</comment>
<comment type="tissue specificity">
    <text evidence="4">Expressed by the venom gland.</text>
</comment>
<comment type="mass spectrometry" mass="8752.02" method="Electrospray" evidence="3"/>
<comment type="toxic dose">
    <text evidence="3">LD(50) is between 0.05 and 0.20 mg/kg by intraperitoneal injection into mice. These data should be viewed cautiously since only a few mice have been injected due to the low amount of toxin available.</text>
</comment>
<comment type="miscellaneous">
    <text evidence="5">Exists in two forms which are separated by reverse-phase high-performance liquid chromatography, but which have the same sequence and molecular weight. The existence of cis and trans isomers may explain the two different elution peaks (PubMed:9133710).</text>
</comment>
<comment type="similarity">
    <text evidence="4">Belongs to the three-finger toxin family. Long-chain subfamily. Type II alpha-neurotoxin sub-subfamily.</text>
</comment>
<organism>
    <name type="scientific">Acanthophis antarcticus</name>
    <name type="common">Common death adder</name>
    <dbReference type="NCBI Taxonomy" id="8605"/>
    <lineage>
        <taxon>Eukaryota</taxon>
        <taxon>Metazoa</taxon>
        <taxon>Chordata</taxon>
        <taxon>Craniata</taxon>
        <taxon>Vertebrata</taxon>
        <taxon>Euteleostomi</taxon>
        <taxon>Lepidosauria</taxon>
        <taxon>Squamata</taxon>
        <taxon>Bifurcata</taxon>
        <taxon>Unidentata</taxon>
        <taxon>Episquamata</taxon>
        <taxon>Toxicofera</taxon>
        <taxon>Serpentes</taxon>
        <taxon>Colubroidea</taxon>
        <taxon>Elapidae</taxon>
        <taxon>Hydrophiinae</taxon>
        <taxon>Acanthophis</taxon>
    </lineage>
</organism>